<reference key="1">
    <citation type="journal article" date="2007" name="Genome Res.">
        <title>Comparative sequence analyses reveal rapid and divergent evolutionary changes of the WFDC locus in the primate lineage.</title>
        <authorList>
            <consortium name="NISC comparative sequencing program"/>
            <person name="Hurle B."/>
            <person name="Swanson W."/>
            <person name="Green E.D."/>
        </authorList>
    </citation>
    <scope>NUCLEOTIDE SEQUENCE [GENOMIC DNA]</scope>
</reference>
<reference key="2">
    <citation type="submission" date="2011-03" db="EMBL/GenBank/DDBJ databases">
        <title>Version 3 of the genome sequence of Otolemur garnettii(Bushbaby).</title>
        <authorList>
            <consortium name="The Broad Institute Genome Sequencing Platform"/>
            <person name="Di Palma F."/>
            <person name="Johnson J."/>
            <person name="Lander E.S."/>
            <person name="Lindblad-Toh K."/>
            <person name="Jaffe D.B."/>
            <person name="Gnerre S."/>
            <person name="MacCallum I."/>
            <person name="Przybylski D."/>
            <person name="Ribeiro F.J."/>
            <person name="Burton J.N."/>
            <person name="Walker B.J."/>
            <person name="Sharpe T."/>
            <person name="Hall G."/>
        </authorList>
    </citation>
    <scope>NUCLEOTIDE SEQUENCE [LARGE SCALE GENOMIC DNA]</scope>
</reference>
<proteinExistence type="inferred from homology"/>
<sequence>MRFGRLLLLAVLLAGVSQLPAVSGRKKGEKPGGCPPDDGPCLLSVPDQCTDDSQCPSTMKCCPRACFRQCIPRVSVKLGSCPVDQLHCLSPTKHLCHQDSNCSGKKRCCPTACGRDCRDPVKE</sequence>
<protein>
    <recommendedName>
        <fullName>WAP four-disulfide core domain protein 5</fullName>
    </recommendedName>
</protein>
<dbReference type="EMBL" id="DP000040">
    <property type="protein sequence ID" value="ABO52942.1"/>
    <property type="molecule type" value="Genomic_DNA"/>
</dbReference>
<dbReference type="SMR" id="A4K2Q7"/>
<dbReference type="STRING" id="30611.ENSOGAP00000005962"/>
<dbReference type="eggNOG" id="ENOG502S99V">
    <property type="taxonomic scope" value="Eukaryota"/>
</dbReference>
<dbReference type="InParanoid" id="A4K2Q7"/>
<dbReference type="Proteomes" id="UP000005225">
    <property type="component" value="Unassembled WGS sequence"/>
</dbReference>
<dbReference type="GO" id="GO:0005576">
    <property type="term" value="C:extracellular region"/>
    <property type="evidence" value="ECO:0007669"/>
    <property type="project" value="UniProtKB-SubCell"/>
</dbReference>
<dbReference type="GO" id="GO:0004867">
    <property type="term" value="F:serine-type endopeptidase inhibitor activity"/>
    <property type="evidence" value="ECO:0007669"/>
    <property type="project" value="UniProtKB-KW"/>
</dbReference>
<dbReference type="Gene3D" id="4.10.75.10">
    <property type="entry name" value="Elafin-like"/>
    <property type="match status" value="2"/>
</dbReference>
<dbReference type="InterPro" id="IPR036645">
    <property type="entry name" value="Elafin-like_sf"/>
</dbReference>
<dbReference type="InterPro" id="IPR008197">
    <property type="entry name" value="WAP_dom"/>
</dbReference>
<dbReference type="PANTHER" id="PTHR47769">
    <property type="entry name" value="WAP FOUR-DISULFIDE CORE DOMAIN PROTEIN 8"/>
    <property type="match status" value="1"/>
</dbReference>
<dbReference type="PANTHER" id="PTHR47769:SF1">
    <property type="entry name" value="WAP FOUR-DISULFIDE CORE DOMAIN PROTEIN 8"/>
    <property type="match status" value="1"/>
</dbReference>
<dbReference type="Pfam" id="PF00095">
    <property type="entry name" value="WAP"/>
    <property type="match status" value="2"/>
</dbReference>
<dbReference type="PRINTS" id="PR00003">
    <property type="entry name" value="4DISULPHCORE"/>
</dbReference>
<dbReference type="SMART" id="SM00217">
    <property type="entry name" value="WAP"/>
    <property type="match status" value="2"/>
</dbReference>
<dbReference type="SUPFAM" id="SSF57256">
    <property type="entry name" value="Elafin-like"/>
    <property type="match status" value="2"/>
</dbReference>
<dbReference type="PROSITE" id="PS51390">
    <property type="entry name" value="WAP"/>
    <property type="match status" value="2"/>
</dbReference>
<gene>
    <name type="primary">WFDC5</name>
</gene>
<name>WFDC5_OTOGA</name>
<feature type="signal peptide" evidence="2">
    <location>
        <begin position="1"/>
        <end position="24"/>
    </location>
</feature>
<feature type="chain" id="PRO_0000289640" description="WAP four-disulfide core domain protein 5">
    <location>
        <begin position="25"/>
        <end position="123"/>
    </location>
</feature>
<feature type="domain" description="WAP 1" evidence="3">
    <location>
        <begin position="27"/>
        <end position="74"/>
    </location>
</feature>
<feature type="domain" description="WAP 2" evidence="3">
    <location>
        <begin position="75"/>
        <end position="121"/>
    </location>
</feature>
<feature type="disulfide bond" evidence="3">
    <location>
        <begin position="34"/>
        <end position="62"/>
    </location>
</feature>
<feature type="disulfide bond" evidence="3">
    <location>
        <begin position="41"/>
        <end position="66"/>
    </location>
</feature>
<feature type="disulfide bond" evidence="3">
    <location>
        <begin position="49"/>
        <end position="61"/>
    </location>
</feature>
<feature type="disulfide bond" evidence="3">
    <location>
        <begin position="55"/>
        <end position="70"/>
    </location>
</feature>
<feature type="disulfide bond" evidence="3">
    <location>
        <begin position="81"/>
        <end position="109"/>
    </location>
</feature>
<feature type="disulfide bond" evidence="3">
    <location>
        <begin position="88"/>
        <end position="113"/>
    </location>
</feature>
<feature type="disulfide bond" evidence="3">
    <location>
        <begin position="96"/>
        <end position="108"/>
    </location>
</feature>
<feature type="disulfide bond" evidence="3">
    <location>
        <begin position="102"/>
        <end position="117"/>
    </location>
</feature>
<comment type="function">
    <text evidence="1">Putative acid-stable proteinase inhibitor.</text>
</comment>
<comment type="subcellular location">
    <subcellularLocation>
        <location evidence="4">Secreted</location>
    </subcellularLocation>
</comment>
<organism>
    <name type="scientific">Otolemur garnettii</name>
    <name type="common">Small-eared galago</name>
    <name type="synonym">Garnett's greater bushbaby</name>
    <dbReference type="NCBI Taxonomy" id="30611"/>
    <lineage>
        <taxon>Eukaryota</taxon>
        <taxon>Metazoa</taxon>
        <taxon>Chordata</taxon>
        <taxon>Craniata</taxon>
        <taxon>Vertebrata</taxon>
        <taxon>Euteleostomi</taxon>
        <taxon>Mammalia</taxon>
        <taxon>Eutheria</taxon>
        <taxon>Euarchontoglires</taxon>
        <taxon>Primates</taxon>
        <taxon>Strepsirrhini</taxon>
        <taxon>Lorisiformes</taxon>
        <taxon>Galagidae</taxon>
        <taxon>Otolemur</taxon>
    </lineage>
</organism>
<evidence type="ECO:0000250" key="1"/>
<evidence type="ECO:0000255" key="2"/>
<evidence type="ECO:0000255" key="3">
    <source>
        <dbReference type="PROSITE-ProRule" id="PRU00722"/>
    </source>
</evidence>
<evidence type="ECO:0000305" key="4"/>
<keyword id="KW-1015">Disulfide bond</keyword>
<keyword id="KW-0646">Protease inhibitor</keyword>
<keyword id="KW-1185">Reference proteome</keyword>
<keyword id="KW-0677">Repeat</keyword>
<keyword id="KW-0964">Secreted</keyword>
<keyword id="KW-0722">Serine protease inhibitor</keyword>
<keyword id="KW-0732">Signal</keyword>
<accession>A4K2Q7</accession>